<dbReference type="EMBL" id="L42023">
    <property type="protein sequence ID" value="AAC21721.1"/>
    <property type="molecule type" value="Genomic_DNA"/>
</dbReference>
<dbReference type="PIR" id="C64000">
    <property type="entry name" value="C64000"/>
</dbReference>
<dbReference type="RefSeq" id="NP_438216.1">
    <property type="nucleotide sequence ID" value="NC_000907.1"/>
</dbReference>
<dbReference type="STRING" id="71421.HI_0043"/>
<dbReference type="EnsemblBacteria" id="AAC21721">
    <property type="protein sequence ID" value="AAC21721"/>
    <property type="gene ID" value="HI_0043"/>
</dbReference>
<dbReference type="KEGG" id="hin:HI_0043"/>
<dbReference type="PATRIC" id="fig|71421.8.peg.43"/>
<dbReference type="eggNOG" id="COG3768">
    <property type="taxonomic scope" value="Bacteria"/>
</dbReference>
<dbReference type="HOGENOM" id="CLU_057693_2_0_6"/>
<dbReference type="OrthoDB" id="958025at2"/>
<dbReference type="PhylomeDB" id="P43931"/>
<dbReference type="BioCyc" id="HINF71421:G1GJ1-43-MONOMER"/>
<dbReference type="Proteomes" id="UP000000579">
    <property type="component" value="Chromosome"/>
</dbReference>
<dbReference type="GO" id="GO:0005886">
    <property type="term" value="C:plasma membrane"/>
    <property type="evidence" value="ECO:0000318"/>
    <property type="project" value="GO_Central"/>
</dbReference>
<dbReference type="HAMAP" id="MF_01085">
    <property type="entry name" value="UPF0283"/>
    <property type="match status" value="1"/>
</dbReference>
<dbReference type="InterPro" id="IPR021147">
    <property type="entry name" value="DUF697"/>
</dbReference>
<dbReference type="InterPro" id="IPR006507">
    <property type="entry name" value="UPF0283"/>
</dbReference>
<dbReference type="NCBIfam" id="TIGR01620">
    <property type="entry name" value="hyp_HI0043"/>
    <property type="match status" value="1"/>
</dbReference>
<dbReference type="PANTHER" id="PTHR39342">
    <property type="entry name" value="UPF0283 MEMBRANE PROTEIN YCJF"/>
    <property type="match status" value="1"/>
</dbReference>
<dbReference type="PANTHER" id="PTHR39342:SF1">
    <property type="entry name" value="UPF0283 MEMBRANE PROTEIN YCJF"/>
    <property type="match status" value="1"/>
</dbReference>
<dbReference type="Pfam" id="PF05128">
    <property type="entry name" value="DUF697"/>
    <property type="match status" value="1"/>
</dbReference>
<name>Y043_HAEIN</name>
<sequence length="354" mass="40436">MEKQIFEHSVNVEEEHYQPKQEFHNMEAKLDEALDGELLDAQLEQALKPKSSFRKTLLKFTALLFGLATVAQSVQWIWDSYQKHQWIYLAFALVSLIIILLGIKEIICEWRRLVRLKKREQWQQQSQQIWLESAVKNGDVFSVHNAEKSKILCLDIAKSLGLENDSPTVIQWQHQLNEAYSAQEIAHLFSRHVLSSFDAQAKKLISKMAAESAVIVAISPLAVVDMFFIAWRNLRLMNKIAEIYGIELGYFPRIRLLRMVLVNIAFAGATEVAQDIGMDWLSQDVTAKLSTRIAQGIGVGLLTARLGVKAMELCRPLAFQLNEKPKLSHIQQELLSSVKDIVLGKNKIYKKEQI</sequence>
<protein>
    <recommendedName>
        <fullName evidence="1">UPF0283 membrane protein HI_0043</fullName>
    </recommendedName>
</protein>
<organism>
    <name type="scientific">Haemophilus influenzae (strain ATCC 51907 / DSM 11121 / KW20 / Rd)</name>
    <dbReference type="NCBI Taxonomy" id="71421"/>
    <lineage>
        <taxon>Bacteria</taxon>
        <taxon>Pseudomonadati</taxon>
        <taxon>Pseudomonadota</taxon>
        <taxon>Gammaproteobacteria</taxon>
        <taxon>Pasteurellales</taxon>
        <taxon>Pasteurellaceae</taxon>
        <taxon>Haemophilus</taxon>
    </lineage>
</organism>
<gene>
    <name type="ordered locus">HI_0043</name>
</gene>
<evidence type="ECO:0000255" key="1">
    <source>
        <dbReference type="HAMAP-Rule" id="MF_01085"/>
    </source>
</evidence>
<proteinExistence type="inferred from homology"/>
<reference key="1">
    <citation type="journal article" date="1995" name="Science">
        <title>Whole-genome random sequencing and assembly of Haemophilus influenzae Rd.</title>
        <authorList>
            <person name="Fleischmann R.D."/>
            <person name="Adams M.D."/>
            <person name="White O."/>
            <person name="Clayton R.A."/>
            <person name="Kirkness E.F."/>
            <person name="Kerlavage A.R."/>
            <person name="Bult C.J."/>
            <person name="Tomb J.-F."/>
            <person name="Dougherty B.A."/>
            <person name="Merrick J.M."/>
            <person name="McKenney K."/>
            <person name="Sutton G.G."/>
            <person name="FitzHugh W."/>
            <person name="Fields C.A."/>
            <person name="Gocayne J.D."/>
            <person name="Scott J.D."/>
            <person name="Shirley R."/>
            <person name="Liu L.-I."/>
            <person name="Glodek A."/>
            <person name="Kelley J.M."/>
            <person name="Weidman J.F."/>
            <person name="Phillips C.A."/>
            <person name="Spriggs T."/>
            <person name="Hedblom E."/>
            <person name="Cotton M.D."/>
            <person name="Utterback T.R."/>
            <person name="Hanna M.C."/>
            <person name="Nguyen D.T."/>
            <person name="Saudek D.M."/>
            <person name="Brandon R.C."/>
            <person name="Fine L.D."/>
            <person name="Fritchman J.L."/>
            <person name="Fuhrmann J.L."/>
            <person name="Geoghagen N.S.M."/>
            <person name="Gnehm C.L."/>
            <person name="McDonald L.A."/>
            <person name="Small K.V."/>
            <person name="Fraser C.M."/>
            <person name="Smith H.O."/>
            <person name="Venter J.C."/>
        </authorList>
    </citation>
    <scope>NUCLEOTIDE SEQUENCE [LARGE SCALE GENOMIC DNA]</scope>
    <source>
        <strain>ATCC 51907 / DSM 11121 / KW20 / Rd</strain>
    </source>
</reference>
<keyword id="KW-0997">Cell inner membrane</keyword>
<keyword id="KW-1003">Cell membrane</keyword>
<keyword id="KW-0472">Membrane</keyword>
<keyword id="KW-1185">Reference proteome</keyword>
<keyword id="KW-0812">Transmembrane</keyword>
<keyword id="KW-1133">Transmembrane helix</keyword>
<comment type="subcellular location">
    <subcellularLocation>
        <location evidence="1">Cell inner membrane</location>
        <topology evidence="1">Multi-pass membrane protein</topology>
    </subcellularLocation>
</comment>
<comment type="similarity">
    <text evidence="1">Belongs to the UPF0283 family.</text>
</comment>
<accession>P43931</accession>
<feature type="chain" id="PRO_0000214176" description="UPF0283 membrane protein HI_0043">
    <location>
        <begin position="1"/>
        <end position="354"/>
    </location>
</feature>
<feature type="transmembrane region" description="Helical" evidence="1">
    <location>
        <begin position="57"/>
        <end position="77"/>
    </location>
</feature>
<feature type="transmembrane region" description="Helical" evidence="1">
    <location>
        <begin position="87"/>
        <end position="107"/>
    </location>
</feature>
<feature type="transmembrane region" description="Helical" evidence="1">
    <location>
        <begin position="211"/>
        <end position="231"/>
    </location>
</feature>